<name>AGLU_MUCJA</name>
<protein>
    <recommendedName>
        <fullName>Alpha-glucosidase</fullName>
        <ecNumber>3.2.1.20</ecNumber>
    </recommendedName>
    <alternativeName>
        <fullName>Maltase</fullName>
    </alternativeName>
</protein>
<comment type="function">
    <text>Hydrolyzes not only malto-oligosaccharides but also soluble starch.</text>
</comment>
<comment type="catalytic activity">
    <reaction>
        <text>Hydrolysis of terminal, non-reducing (1-&gt;4)-linked alpha-D-glucose residues with release of alpha-D-glucose.</text>
        <dbReference type="EC" id="3.2.1.20"/>
    </reaction>
</comment>
<comment type="similarity">
    <text evidence="4">Belongs to the glycosyl hydrolase 31 family.</text>
</comment>
<evidence type="ECO:0000250" key="1"/>
<evidence type="ECO:0000255" key="2"/>
<evidence type="ECO:0000255" key="3">
    <source>
        <dbReference type="PROSITE-ProRule" id="PRU10066"/>
    </source>
</evidence>
<evidence type="ECO:0000305" key="4"/>
<proteinExistence type="evidence at protein level"/>
<reference key="1">
    <citation type="journal article" date="1996" name="J. Biochem.">
        <title>Molecular cloning, sequencing, and expression of a cDNA encoding alpha-glucosidase from Mucor javanicus.</title>
        <authorList>
            <person name="Sugimoto M."/>
            <person name="Suzuki Y."/>
        </authorList>
    </citation>
    <scope>NUCLEOTIDE SEQUENCE [MRNA]</scope>
    <scope>PARTIAL PROTEIN SEQUENCE</scope>
    <source>
        <strain>DSM 1222 / BCRC 31544 / NBRC 4570 / NRRL 13035</strain>
    </source>
</reference>
<dbReference type="EC" id="3.2.1.20"/>
<dbReference type="EMBL" id="D67034">
    <property type="protein sequence ID" value="BAA11053.1"/>
    <property type="molecule type" value="mRNA"/>
</dbReference>
<dbReference type="SMR" id="Q92442"/>
<dbReference type="CAZy" id="GH31">
    <property type="family name" value="Glycoside Hydrolase Family 31"/>
</dbReference>
<dbReference type="GO" id="GO:0004558">
    <property type="term" value="F:alpha-1,4-glucosidase activity"/>
    <property type="evidence" value="ECO:0007669"/>
    <property type="project" value="UniProtKB-EC"/>
</dbReference>
<dbReference type="GO" id="GO:0030246">
    <property type="term" value="F:carbohydrate binding"/>
    <property type="evidence" value="ECO:0007669"/>
    <property type="project" value="InterPro"/>
</dbReference>
<dbReference type="GO" id="GO:0005975">
    <property type="term" value="P:carbohydrate metabolic process"/>
    <property type="evidence" value="ECO:0007669"/>
    <property type="project" value="InterPro"/>
</dbReference>
<dbReference type="CDD" id="cd06602">
    <property type="entry name" value="GH31_MGAM_SI_GAA"/>
    <property type="match status" value="1"/>
</dbReference>
<dbReference type="CDD" id="cd14752">
    <property type="entry name" value="GH31_N"/>
    <property type="match status" value="1"/>
</dbReference>
<dbReference type="Gene3D" id="3.20.20.80">
    <property type="entry name" value="Glycosidases"/>
    <property type="match status" value="1"/>
</dbReference>
<dbReference type="Gene3D" id="2.60.40.1760">
    <property type="entry name" value="glycosyl hydrolase (family 31)"/>
    <property type="match status" value="1"/>
</dbReference>
<dbReference type="Gene3D" id="2.60.40.1180">
    <property type="entry name" value="Golgi alpha-mannosidase II"/>
    <property type="match status" value="2"/>
</dbReference>
<dbReference type="InterPro" id="IPR011013">
    <property type="entry name" value="Gal_mutarotase_sf_dom"/>
</dbReference>
<dbReference type="InterPro" id="IPR030458">
    <property type="entry name" value="Glyco_hydro_31_AS"/>
</dbReference>
<dbReference type="InterPro" id="IPR048395">
    <property type="entry name" value="Glyco_hydro_31_C"/>
</dbReference>
<dbReference type="InterPro" id="IPR030459">
    <property type="entry name" value="Glyco_hydro_31_CS"/>
</dbReference>
<dbReference type="InterPro" id="IPR025887">
    <property type="entry name" value="Glyco_hydro_31_N_dom"/>
</dbReference>
<dbReference type="InterPro" id="IPR000322">
    <property type="entry name" value="Glyco_hydro_31_TIM"/>
</dbReference>
<dbReference type="InterPro" id="IPR013780">
    <property type="entry name" value="Glyco_hydro_b"/>
</dbReference>
<dbReference type="InterPro" id="IPR017853">
    <property type="entry name" value="Glycoside_hydrolase_SF"/>
</dbReference>
<dbReference type="PANTHER" id="PTHR22762">
    <property type="entry name" value="ALPHA-GLUCOSIDASE"/>
    <property type="match status" value="1"/>
</dbReference>
<dbReference type="PANTHER" id="PTHR22762:SF133">
    <property type="entry name" value="P-TYPE DOMAIN-CONTAINING PROTEIN"/>
    <property type="match status" value="1"/>
</dbReference>
<dbReference type="Pfam" id="PF13802">
    <property type="entry name" value="Gal_mutarotas_2"/>
    <property type="match status" value="1"/>
</dbReference>
<dbReference type="Pfam" id="PF01055">
    <property type="entry name" value="Glyco_hydro_31_2nd"/>
    <property type="match status" value="1"/>
</dbReference>
<dbReference type="Pfam" id="PF21365">
    <property type="entry name" value="Glyco_hydro_31_3rd"/>
    <property type="match status" value="1"/>
</dbReference>
<dbReference type="SUPFAM" id="SSF51445">
    <property type="entry name" value="(Trans)glycosidases"/>
    <property type="match status" value="1"/>
</dbReference>
<dbReference type="SUPFAM" id="SSF74650">
    <property type="entry name" value="Galactose mutarotase-like"/>
    <property type="match status" value="1"/>
</dbReference>
<dbReference type="SUPFAM" id="SSF51011">
    <property type="entry name" value="Glycosyl hydrolase domain"/>
    <property type="match status" value="1"/>
</dbReference>
<dbReference type="PROSITE" id="PS00129">
    <property type="entry name" value="GLYCOSYL_HYDROL_F31_1"/>
    <property type="match status" value="1"/>
</dbReference>
<dbReference type="PROSITE" id="PS00707">
    <property type="entry name" value="GLYCOSYL_HYDROL_F31_2"/>
    <property type="match status" value="1"/>
</dbReference>
<keyword id="KW-0903">Direct protein sequencing</keyword>
<keyword id="KW-0325">Glycoprotein</keyword>
<keyword id="KW-0326">Glycosidase</keyword>
<keyword id="KW-0378">Hydrolase</keyword>
<keyword id="KW-0732">Signal</keyword>
<sequence>MAKVSFIFVAIALITGNVLCQTDATYAVSSSAPGYKIDGHVRKTEAGLHIPLTLNSRGNKKTGIDTFGKTIKDITVDVEYETEERLHVKISDKAKKQYLVPDSPLGFERPQIKHYVSPKHSNLDFQYTAKPFSFKVVRKDDKTTIFDTTNMPLVFEDQYLELSTKVPEDANIYGIGEVTAPFRRTHNVTTLWARDNPDDFYRNIYGAHPYYQEVRDGKAHGALLMNAHGMDVITTEGRITYKVIGGILDFYFFAPKSGKPNDLSIAYTDLIGKPMMPSHWMLGWHHCRYGYPNIDKVETVKRKYKEANIPLQTVWVDIDYMEETKDFTFDKVNFPQDRMIGLGEQLHKDGQNYVVMVDPAISANTTYEPYVRGTEMDVWIKNADGSDFIGSVWPGFTTFPDWWHPNATKYWNKEIIDFVDMLGVDGLWIDMNEPASFCLGSCGSGKVDAGNQPYRWTYTEEEQAANHTRWEKELKAMGNPPGEERNLLYPKYAINNGAGNLSEFTVATTALHYGNIPHYDIHNLYGHAESHITRQALIKHKNKIRPFVLTRSSFPGSGKSVGHWTGDNHSFWPYLKNSIANILNFQMFGVSYSGADVCGFNSDTTEELCTRWMEIGAFYPFARNHNNNAAKDQEPYLWESTAEASRIAINTRYEMLPYFYTLFEESNRLGLGVWRPLIFEYPAYEELVSNDVQTLVGSDILLSPVLDEGKTSVKAQFPGGQWYDWYTHELTVDNKSNKKVKTVTLDAPLTHIPIHIRGGAIIPTKTPKYTVGETFATPYNLVIALDKKGQASGRLYIDDGESLEVKSSSGYHFHLQEWSPQGFWQVWLQEGRKDWLHHHYWQARQQVAKGSRWQEDYQIDPWQE</sequence>
<accession>Q92442</accession>
<feature type="signal peptide" evidence="2">
    <location>
        <begin position="1"/>
        <end position="22"/>
    </location>
</feature>
<feature type="chain" id="PRO_0000018580" description="Alpha-glucosidase">
    <location>
        <begin position="23"/>
        <end position="864"/>
    </location>
</feature>
<feature type="active site" description="Nucleophile" evidence="3">
    <location>
        <position position="430"/>
    </location>
</feature>
<feature type="active site" evidence="1">
    <location>
        <position position="433"/>
    </location>
</feature>
<feature type="active site" description="Proton donor" evidence="1">
    <location>
        <position position="567"/>
    </location>
</feature>
<feature type="glycosylation site" description="N-linked (GlcNAc...) asparagine" evidence="2">
    <location>
        <position position="187"/>
    </location>
</feature>
<feature type="glycosylation site" description="N-linked (GlcNAc...) asparagine" evidence="2">
    <location>
        <position position="364"/>
    </location>
</feature>
<feature type="glycosylation site" description="N-linked (GlcNAc...) asparagine" evidence="2">
    <location>
        <position position="406"/>
    </location>
</feature>
<feature type="glycosylation site" description="N-linked (GlcNAc...) asparagine" evidence="2">
    <location>
        <position position="466"/>
    </location>
</feature>
<feature type="glycosylation site" description="N-linked (GlcNAc...) asparagine" evidence="2">
    <location>
        <position position="500"/>
    </location>
</feature>
<feature type="glycosylation site" description="N-linked (GlcNAc...) asparagine" evidence="2">
    <location>
        <position position="568"/>
    </location>
</feature>
<feature type="glycosylation site" description="N-linked (GlcNAc...) asparagine" evidence="2">
    <location>
        <position position="734"/>
    </location>
</feature>
<organism>
    <name type="scientific">Mucor javanicus</name>
    <dbReference type="NCBI Taxonomy" id="51122"/>
    <lineage>
        <taxon>Eukaryota</taxon>
        <taxon>Fungi</taxon>
        <taxon>Fungi incertae sedis</taxon>
        <taxon>Mucoromycota</taxon>
        <taxon>Mucoromycotina</taxon>
        <taxon>Mucoromycetes</taxon>
        <taxon>Mucorales</taxon>
        <taxon>Mucorineae</taxon>
        <taxon>Mucoraceae</taxon>
        <taxon>Mucor</taxon>
    </lineage>
</organism>